<accession>B5F065</accession>
<organism>
    <name type="scientific">Salmonella agona (strain SL483)</name>
    <dbReference type="NCBI Taxonomy" id="454166"/>
    <lineage>
        <taxon>Bacteria</taxon>
        <taxon>Pseudomonadati</taxon>
        <taxon>Pseudomonadota</taxon>
        <taxon>Gammaproteobacteria</taxon>
        <taxon>Enterobacterales</taxon>
        <taxon>Enterobacteriaceae</taxon>
        <taxon>Salmonella</taxon>
    </lineage>
</organism>
<protein>
    <recommendedName>
        <fullName evidence="1">Imidazolonepropionase</fullName>
        <ecNumber evidence="1">3.5.2.7</ecNumber>
    </recommendedName>
    <alternativeName>
        <fullName evidence="1">Imidazolone-5-propionate hydrolase</fullName>
    </alternativeName>
</protein>
<dbReference type="EC" id="3.5.2.7" evidence="1"/>
<dbReference type="EMBL" id="CP001138">
    <property type="protein sequence ID" value="ACH51491.1"/>
    <property type="molecule type" value="Genomic_DNA"/>
</dbReference>
<dbReference type="RefSeq" id="WP_001249477.1">
    <property type="nucleotide sequence ID" value="NC_011149.1"/>
</dbReference>
<dbReference type="SMR" id="B5F065"/>
<dbReference type="KEGG" id="sea:SeAg_B0823"/>
<dbReference type="HOGENOM" id="CLU_041647_0_0_6"/>
<dbReference type="UniPathway" id="UPA00379">
    <property type="reaction ID" value="UER00551"/>
</dbReference>
<dbReference type="Proteomes" id="UP000008819">
    <property type="component" value="Chromosome"/>
</dbReference>
<dbReference type="GO" id="GO:0005737">
    <property type="term" value="C:cytoplasm"/>
    <property type="evidence" value="ECO:0007669"/>
    <property type="project" value="UniProtKB-SubCell"/>
</dbReference>
<dbReference type="GO" id="GO:0050480">
    <property type="term" value="F:imidazolonepropionase activity"/>
    <property type="evidence" value="ECO:0007669"/>
    <property type="project" value="UniProtKB-UniRule"/>
</dbReference>
<dbReference type="GO" id="GO:0005506">
    <property type="term" value="F:iron ion binding"/>
    <property type="evidence" value="ECO:0007669"/>
    <property type="project" value="UniProtKB-UniRule"/>
</dbReference>
<dbReference type="GO" id="GO:0008270">
    <property type="term" value="F:zinc ion binding"/>
    <property type="evidence" value="ECO:0007669"/>
    <property type="project" value="UniProtKB-UniRule"/>
</dbReference>
<dbReference type="GO" id="GO:0019556">
    <property type="term" value="P:L-histidine catabolic process to glutamate and formamide"/>
    <property type="evidence" value="ECO:0007669"/>
    <property type="project" value="UniProtKB-UniPathway"/>
</dbReference>
<dbReference type="GO" id="GO:0019557">
    <property type="term" value="P:L-histidine catabolic process to glutamate and formate"/>
    <property type="evidence" value="ECO:0007669"/>
    <property type="project" value="UniProtKB-UniPathway"/>
</dbReference>
<dbReference type="FunFam" id="3.20.20.140:FF:000007">
    <property type="entry name" value="Imidazolonepropionase"/>
    <property type="match status" value="1"/>
</dbReference>
<dbReference type="Gene3D" id="3.20.20.140">
    <property type="entry name" value="Metal-dependent hydrolases"/>
    <property type="match status" value="1"/>
</dbReference>
<dbReference type="Gene3D" id="2.30.40.10">
    <property type="entry name" value="Urease, subunit C, domain 1"/>
    <property type="match status" value="1"/>
</dbReference>
<dbReference type="HAMAP" id="MF_00372">
    <property type="entry name" value="HutI"/>
    <property type="match status" value="1"/>
</dbReference>
<dbReference type="InterPro" id="IPR006680">
    <property type="entry name" value="Amidohydro-rel"/>
</dbReference>
<dbReference type="InterPro" id="IPR005920">
    <property type="entry name" value="HutI"/>
</dbReference>
<dbReference type="InterPro" id="IPR011059">
    <property type="entry name" value="Metal-dep_hydrolase_composite"/>
</dbReference>
<dbReference type="InterPro" id="IPR032466">
    <property type="entry name" value="Metal_Hydrolase"/>
</dbReference>
<dbReference type="NCBIfam" id="TIGR01224">
    <property type="entry name" value="hutI"/>
    <property type="match status" value="1"/>
</dbReference>
<dbReference type="PANTHER" id="PTHR42752">
    <property type="entry name" value="IMIDAZOLONEPROPIONASE"/>
    <property type="match status" value="1"/>
</dbReference>
<dbReference type="PANTHER" id="PTHR42752:SF1">
    <property type="entry name" value="IMIDAZOLONEPROPIONASE-RELATED"/>
    <property type="match status" value="1"/>
</dbReference>
<dbReference type="Pfam" id="PF01979">
    <property type="entry name" value="Amidohydro_1"/>
    <property type="match status" value="1"/>
</dbReference>
<dbReference type="SUPFAM" id="SSF51338">
    <property type="entry name" value="Composite domain of metallo-dependent hydrolases"/>
    <property type="match status" value="1"/>
</dbReference>
<dbReference type="SUPFAM" id="SSF51556">
    <property type="entry name" value="Metallo-dependent hydrolases"/>
    <property type="match status" value="1"/>
</dbReference>
<feature type="chain" id="PRO_1000121549" description="Imidazolonepropionase">
    <location>
        <begin position="1"/>
        <end position="407"/>
    </location>
</feature>
<feature type="binding site" evidence="1">
    <location>
        <position position="74"/>
    </location>
    <ligand>
        <name>Fe(3+)</name>
        <dbReference type="ChEBI" id="CHEBI:29034"/>
    </ligand>
</feature>
<feature type="binding site" evidence="1">
    <location>
        <position position="74"/>
    </location>
    <ligand>
        <name>Zn(2+)</name>
        <dbReference type="ChEBI" id="CHEBI:29105"/>
    </ligand>
</feature>
<feature type="binding site" evidence="1">
    <location>
        <position position="76"/>
    </location>
    <ligand>
        <name>Fe(3+)</name>
        <dbReference type="ChEBI" id="CHEBI:29034"/>
    </ligand>
</feature>
<feature type="binding site" evidence="1">
    <location>
        <position position="76"/>
    </location>
    <ligand>
        <name>Zn(2+)</name>
        <dbReference type="ChEBI" id="CHEBI:29105"/>
    </ligand>
</feature>
<feature type="binding site" evidence="1">
    <location>
        <position position="83"/>
    </location>
    <ligand>
        <name>4-imidazolone-5-propanoate</name>
        <dbReference type="ChEBI" id="CHEBI:77893"/>
    </ligand>
</feature>
<feature type="binding site" evidence="1">
    <location>
        <position position="146"/>
    </location>
    <ligand>
        <name>4-imidazolone-5-propanoate</name>
        <dbReference type="ChEBI" id="CHEBI:77893"/>
    </ligand>
</feature>
<feature type="binding site" evidence="1">
    <location>
        <position position="146"/>
    </location>
    <ligand>
        <name>N-formimidoyl-L-glutamate</name>
        <dbReference type="ChEBI" id="CHEBI:58928"/>
    </ligand>
</feature>
<feature type="binding site" evidence="1">
    <location>
        <position position="179"/>
    </location>
    <ligand>
        <name>4-imidazolone-5-propanoate</name>
        <dbReference type="ChEBI" id="CHEBI:77893"/>
    </ligand>
</feature>
<feature type="binding site" evidence="1">
    <location>
        <position position="244"/>
    </location>
    <ligand>
        <name>Fe(3+)</name>
        <dbReference type="ChEBI" id="CHEBI:29034"/>
    </ligand>
</feature>
<feature type="binding site" evidence="1">
    <location>
        <position position="244"/>
    </location>
    <ligand>
        <name>Zn(2+)</name>
        <dbReference type="ChEBI" id="CHEBI:29105"/>
    </ligand>
</feature>
<feature type="binding site" evidence="1">
    <location>
        <position position="247"/>
    </location>
    <ligand>
        <name>4-imidazolone-5-propanoate</name>
        <dbReference type="ChEBI" id="CHEBI:77893"/>
    </ligand>
</feature>
<feature type="binding site" evidence="1">
    <location>
        <position position="319"/>
    </location>
    <ligand>
        <name>Fe(3+)</name>
        <dbReference type="ChEBI" id="CHEBI:29034"/>
    </ligand>
</feature>
<feature type="binding site" evidence="1">
    <location>
        <position position="319"/>
    </location>
    <ligand>
        <name>Zn(2+)</name>
        <dbReference type="ChEBI" id="CHEBI:29105"/>
    </ligand>
</feature>
<feature type="binding site" evidence="1">
    <location>
        <position position="321"/>
    </location>
    <ligand>
        <name>N-formimidoyl-L-glutamate</name>
        <dbReference type="ChEBI" id="CHEBI:58928"/>
    </ligand>
</feature>
<feature type="binding site" evidence="1">
    <location>
        <position position="323"/>
    </location>
    <ligand>
        <name>N-formimidoyl-L-glutamate</name>
        <dbReference type="ChEBI" id="CHEBI:58928"/>
    </ligand>
</feature>
<feature type="binding site" evidence="1">
    <location>
        <position position="324"/>
    </location>
    <ligand>
        <name>4-imidazolone-5-propanoate</name>
        <dbReference type="ChEBI" id="CHEBI:77893"/>
    </ligand>
</feature>
<proteinExistence type="inferred from homology"/>
<evidence type="ECO:0000255" key="1">
    <source>
        <dbReference type="HAMAP-Rule" id="MF_00372"/>
    </source>
</evidence>
<sequence length="407" mass="44706">MRQLLPGDTVWRNIRLATMDPQRQAPYGLVDNQALIVREGHICDIVPETQLPVSGDNIHDMQGRLVTPGLIDCHTHLVFAGNRAAEWEQRLNGASYQHISAQGGGINATVSATRACAEEPLYLLARERMMRLASEGVTLLEIKSGYGLELATEEKLLRVAAKLAAENAIDISPTLLAAHATPAEYRDDPDGYITLVCETMIPQLWQKGLFDAVDLFCESVGFNVAQSERVLQTAKALGIPVKGHVEQLSLLGGAQLLSRYQGLSADHIEYLDEAGVAAMRDGGTVGVLLPGAFYFLRERQRPPVELLRRYQVPVAVASDFNPGTSPFCSLHLAMNMACVQFGLTPEEVWAGVTRHAARALGRQATHGQIRAGYRADFVVWDAEQPVEIVYEPGRNPLYQRVYRGQIS</sequence>
<comment type="function">
    <text evidence="1">Catalyzes the hydrolytic cleavage of the carbon-nitrogen bond in imidazolone-5-propanoate to yield N-formimidoyl-L-glutamate. It is the third step in the universal histidine degradation pathway.</text>
</comment>
<comment type="catalytic activity">
    <reaction evidence="1">
        <text>4-imidazolone-5-propanoate + H2O = N-formimidoyl-L-glutamate</text>
        <dbReference type="Rhea" id="RHEA:23660"/>
        <dbReference type="ChEBI" id="CHEBI:15377"/>
        <dbReference type="ChEBI" id="CHEBI:58928"/>
        <dbReference type="ChEBI" id="CHEBI:77893"/>
        <dbReference type="EC" id="3.5.2.7"/>
    </reaction>
</comment>
<comment type="cofactor">
    <cofactor evidence="1">
        <name>Zn(2+)</name>
        <dbReference type="ChEBI" id="CHEBI:29105"/>
    </cofactor>
    <cofactor evidence="1">
        <name>Fe(3+)</name>
        <dbReference type="ChEBI" id="CHEBI:29034"/>
    </cofactor>
    <text evidence="1">Binds 1 zinc or iron ion per subunit.</text>
</comment>
<comment type="pathway">
    <text evidence="1">Amino-acid degradation; L-histidine degradation into L-glutamate; N-formimidoyl-L-glutamate from L-histidine: step 3/3.</text>
</comment>
<comment type="subcellular location">
    <subcellularLocation>
        <location evidence="1">Cytoplasm</location>
    </subcellularLocation>
</comment>
<comment type="similarity">
    <text evidence="1">Belongs to the metallo-dependent hydrolases superfamily. HutI family.</text>
</comment>
<gene>
    <name evidence="1" type="primary">hutI</name>
    <name type="ordered locus">SeAg_B0823</name>
</gene>
<keyword id="KW-0963">Cytoplasm</keyword>
<keyword id="KW-0369">Histidine metabolism</keyword>
<keyword id="KW-0378">Hydrolase</keyword>
<keyword id="KW-0408">Iron</keyword>
<keyword id="KW-0479">Metal-binding</keyword>
<keyword id="KW-0862">Zinc</keyword>
<name>HUTI_SALA4</name>
<reference key="1">
    <citation type="journal article" date="2011" name="J. Bacteriol.">
        <title>Comparative genomics of 28 Salmonella enterica isolates: evidence for CRISPR-mediated adaptive sublineage evolution.</title>
        <authorList>
            <person name="Fricke W.F."/>
            <person name="Mammel M.K."/>
            <person name="McDermott P.F."/>
            <person name="Tartera C."/>
            <person name="White D.G."/>
            <person name="Leclerc J.E."/>
            <person name="Ravel J."/>
            <person name="Cebula T.A."/>
        </authorList>
    </citation>
    <scope>NUCLEOTIDE SEQUENCE [LARGE SCALE GENOMIC DNA]</scope>
    <source>
        <strain>SL483</strain>
    </source>
</reference>